<keyword id="KW-0007">Acetylation</keyword>
<keyword id="KW-0025">Alternative splicing</keyword>
<keyword id="KW-0156">Chromatin regulator</keyword>
<keyword id="KW-0158">Chromosome</keyword>
<keyword id="KW-0479">Metal-binding</keyword>
<keyword id="KW-0539">Nucleus</keyword>
<keyword id="KW-1185">Reference proteome</keyword>
<keyword id="KW-0677">Repeat</keyword>
<keyword id="KW-0804">Transcription</keyword>
<keyword id="KW-0805">Transcription regulation</keyword>
<keyword id="KW-0862">Zinc</keyword>
<keyword id="KW-0863">Zinc-finger</keyword>
<gene>
    <name evidence="6" type="primary">Mbtd1</name>
</gene>
<proteinExistence type="evidence at protein level"/>
<reference key="1">
    <citation type="journal article" date="2009" name="PLoS Biol.">
        <title>Lineage-specific biology revealed by a finished genome assembly of the mouse.</title>
        <authorList>
            <person name="Church D.M."/>
            <person name="Goodstadt L."/>
            <person name="Hillier L.W."/>
            <person name="Zody M.C."/>
            <person name="Goldstein S."/>
            <person name="She X."/>
            <person name="Bult C.J."/>
            <person name="Agarwala R."/>
            <person name="Cherry J.L."/>
            <person name="DiCuccio M."/>
            <person name="Hlavina W."/>
            <person name="Kapustin Y."/>
            <person name="Meric P."/>
            <person name="Maglott D."/>
            <person name="Birtle Z."/>
            <person name="Marques A.C."/>
            <person name="Graves T."/>
            <person name="Zhou S."/>
            <person name="Teague B."/>
            <person name="Potamousis K."/>
            <person name="Churas C."/>
            <person name="Place M."/>
            <person name="Herschleb J."/>
            <person name="Runnheim R."/>
            <person name="Forrest D."/>
            <person name="Amos-Landgraf J."/>
            <person name="Schwartz D.C."/>
            <person name="Cheng Z."/>
            <person name="Lindblad-Toh K."/>
            <person name="Eichler E.E."/>
            <person name="Ponting C.P."/>
        </authorList>
    </citation>
    <scope>NUCLEOTIDE SEQUENCE [LARGE SCALE GENOMIC DNA]</scope>
    <source>
        <strain>C57BL/6J</strain>
    </source>
</reference>
<reference key="2">
    <citation type="journal article" date="2004" name="Genome Res.">
        <title>The status, quality, and expansion of the NIH full-length cDNA project: the Mammalian Gene Collection (MGC).</title>
        <authorList>
            <consortium name="The MGC Project Team"/>
        </authorList>
    </citation>
    <scope>NUCLEOTIDE SEQUENCE [LARGE SCALE MRNA] (ISOFORMS 1 AND 2)</scope>
    <source>
        <strain>C57BL/6J</strain>
        <strain>Czech II</strain>
        <tissue>Brain</tissue>
        <tissue>Embryo</tissue>
        <tissue>Mammary tumor</tissue>
    </source>
</reference>
<reference key="3">
    <citation type="journal article" date="2013" name="Mol. Cell">
        <title>SIRT5-mediated lysine desuccinylation impacts diverse metabolic pathways.</title>
        <authorList>
            <person name="Park J."/>
            <person name="Chen Y."/>
            <person name="Tishkoff D.X."/>
            <person name="Peng C."/>
            <person name="Tan M."/>
            <person name="Dai L."/>
            <person name="Xie Z."/>
            <person name="Zhang Y."/>
            <person name="Zwaans B.M."/>
            <person name="Skinner M.E."/>
            <person name="Lombard D.B."/>
            <person name="Zhao Y."/>
        </authorList>
    </citation>
    <scope>ACETYLATION [LARGE SCALE ANALYSIS] AT LYS-115</scope>
    <scope>IDENTIFICATION BY MASS SPECTROMETRY [LARGE SCALE ANALYSIS]</scope>
    <source>
        <tissue>Embryonic fibroblast</tissue>
    </source>
</reference>
<sequence>MFDGYDSCSEDTSSSSSSEESEEEVAPLPSNLPIIKNNGQVYTYPDGKSGMATCEMCGMVGVRDAFYSKTKRFCSVSCSRSYSSNSKKASILARLQGKPPTKKAKVLQKQPLVAKLAAYAQYQATLQNQAKTKAGNSAISVEGFSWGNYINSNSFIAAPVACFKHAPMGTCWGDISENVRIEVPNTDCSLPTKVFWIAGIIKLAGYNALLRYEGFENDSSLDFWCNICGSDIHPVGWCAASGKPLVPPRTVQHKYTNWKAFLVKRLTGAKTLPPDFSQKVSESMQYPFKPCMRVEVVDKRHLCRTRVAVVESVIGGRLRLVYEESEDRTDDFWCHMHSPLIHHIGWSRSIGHRFKRSDITKKQDGHFDTPPHLFAKVKEVDQSGEWFKEGMKLEAIDPLNLSTICVATIRKVLADGFLMIGIDGSEAADGSDWFCYHATSPSIFPVGFCEINMIELTPPRGYTKLPFKWFDYLRETGSIAAPVKLFNKDVPNHGFRVGMKLEAVDLMEPRLICVATVTRIIHRLLRIHFDGWEEEYDQWVDCESPDLYPVGWCQLTGYQLQPPASQSSRESQSASSKQKKKAKSQQYKGHKKMTTSQLKEELLDGEDYSFLHGASDQESNGSATVYIKQEP</sequence>
<organism>
    <name type="scientific">Mus musculus</name>
    <name type="common">Mouse</name>
    <dbReference type="NCBI Taxonomy" id="10090"/>
    <lineage>
        <taxon>Eukaryota</taxon>
        <taxon>Metazoa</taxon>
        <taxon>Chordata</taxon>
        <taxon>Craniata</taxon>
        <taxon>Vertebrata</taxon>
        <taxon>Euteleostomi</taxon>
        <taxon>Mammalia</taxon>
        <taxon>Eutheria</taxon>
        <taxon>Euarchontoglires</taxon>
        <taxon>Glires</taxon>
        <taxon>Rodentia</taxon>
        <taxon>Myomorpha</taxon>
        <taxon>Muroidea</taxon>
        <taxon>Muridae</taxon>
        <taxon>Murinae</taxon>
        <taxon>Mus</taxon>
        <taxon>Mus</taxon>
    </lineage>
</organism>
<name>MBTD1_MOUSE</name>
<protein>
    <recommendedName>
        <fullName evidence="5">MBT domain-containing protein 1</fullName>
    </recommendedName>
</protein>
<comment type="function">
    <text evidence="1">Chromatin reader component of the NuA4 histone acetyltransferase complex, a multiprotein complex involved in transcriptional activation of select genes principally by acetylation of nucleosomal histones H4 and H2A. The NuA4 complex plays a direct role in repair of DNA double-strand breaks (DSBs) by promoting homologous recombination (HR). MBTD1 specifically recognizes and binds monomethylated and dimethylated 'Lys-20' on histone H4 (H4K20me1 and H4K20me2, respectively). In the NuA4 complex, MBTD1 promotes recruitment of the complex to H4K20me marks by competing with TP53BP1 for binding to H4K20me. Following recruitment to H4K20me at DNA breaks, the NuA4 complex catalyzes acetylation of 'Lys-15' on histone H2A (H2AK15), blocking the ubiquitination mark required for TP53BP1 localization at DNA breaks, thereby promoting homologous recombination (HR).</text>
</comment>
<comment type="subunit">
    <text evidence="1">Monomer. Component of the NuA4 histone acetyltransferase complex. Interacts with EPC1; interaction is direct and promotes recruitment of MBTD1 into the NuA4 histone acetyltransferase complex.</text>
</comment>
<comment type="subcellular location">
    <subcellularLocation>
        <location evidence="1">Nucleus</location>
    </subcellularLocation>
    <subcellularLocation>
        <location evidence="1">Chromosome</location>
    </subcellularLocation>
</comment>
<comment type="alternative products">
    <event type="alternative splicing"/>
    <isoform>
        <id>Q6P5G3-1</id>
        <name>1</name>
        <sequence type="displayed"/>
    </isoform>
    <isoform>
        <id>Q6P5G3-2</id>
        <name>2</name>
        <sequence type="described" ref="VSP_030119 VSP_030120"/>
    </isoform>
</comment>
<comment type="sequence caution" evidence="5">
    <conflict type="erroneous initiation">
        <sequence resource="EMBL-CDS" id="AAH20018"/>
    </conflict>
</comment>
<dbReference type="EMBL" id="AL662838">
    <property type="status" value="NOT_ANNOTATED_CDS"/>
    <property type="molecule type" value="Genomic_DNA"/>
</dbReference>
<dbReference type="EMBL" id="AL663078">
    <property type="status" value="NOT_ANNOTATED_CDS"/>
    <property type="molecule type" value="Genomic_DNA"/>
</dbReference>
<dbReference type="EMBL" id="BC020018">
    <property type="protein sequence ID" value="AAH20018.1"/>
    <property type="status" value="ALT_INIT"/>
    <property type="molecule type" value="mRNA"/>
</dbReference>
<dbReference type="EMBL" id="BC062907">
    <property type="protein sequence ID" value="AAH62907.1"/>
    <property type="molecule type" value="mRNA"/>
</dbReference>
<dbReference type="EMBL" id="BC064014">
    <property type="protein sequence ID" value="AAH64014.1"/>
    <property type="molecule type" value="mRNA"/>
</dbReference>
<dbReference type="CCDS" id="CCDS48883.1">
    <molecule id="Q6P5G3-1"/>
</dbReference>
<dbReference type="CCDS" id="CCDS83868.1">
    <molecule id="Q6P5G3-2"/>
</dbReference>
<dbReference type="RefSeq" id="NP_001333454.1">
    <molecule id="Q6P5G3-2"/>
    <property type="nucleotide sequence ID" value="NM_001346525.2"/>
</dbReference>
<dbReference type="RefSeq" id="NP_001350265.1">
    <molecule id="Q6P5G3-1"/>
    <property type="nucleotide sequence ID" value="NM_001363336.1"/>
</dbReference>
<dbReference type="RefSeq" id="NP_598773.2">
    <molecule id="Q6P5G3-1"/>
    <property type="nucleotide sequence ID" value="NM_134012.4"/>
</dbReference>
<dbReference type="RefSeq" id="XP_006531973.1">
    <property type="nucleotide sequence ID" value="XM_006531910.3"/>
</dbReference>
<dbReference type="RefSeq" id="XP_017169693.1">
    <property type="nucleotide sequence ID" value="XM_017314204.1"/>
</dbReference>
<dbReference type="RefSeq" id="XP_017169694.1">
    <property type="nucleotide sequence ID" value="XM_017314205.1"/>
</dbReference>
<dbReference type="RefSeq" id="XP_017169695.1">
    <property type="nucleotide sequence ID" value="XM_017314206.1"/>
</dbReference>
<dbReference type="RefSeq" id="XP_030101307.1">
    <molecule id="Q6P5G3-1"/>
    <property type="nucleotide sequence ID" value="XM_030245447.2"/>
</dbReference>
<dbReference type="RefSeq" id="XP_030101308.1">
    <molecule id="Q6P5G3-1"/>
    <property type="nucleotide sequence ID" value="XM_030245448.2"/>
</dbReference>
<dbReference type="RefSeq" id="XP_036012074.1">
    <molecule id="Q6P5G3-1"/>
    <property type="nucleotide sequence ID" value="XM_036156181.1"/>
</dbReference>
<dbReference type="SMR" id="Q6P5G3"/>
<dbReference type="BioGRID" id="222109">
    <property type="interactions" value="6"/>
</dbReference>
<dbReference type="ComplexPortal" id="CPX-990">
    <property type="entry name" value="NuA4 histone acetyltransferase complex"/>
</dbReference>
<dbReference type="FunCoup" id="Q6P5G3">
    <property type="interactions" value="2872"/>
</dbReference>
<dbReference type="IntAct" id="Q6P5G3">
    <property type="interactions" value="2"/>
</dbReference>
<dbReference type="MINT" id="Q6P5G3"/>
<dbReference type="STRING" id="10090.ENSMUSP00000103485"/>
<dbReference type="iPTMnet" id="Q6P5G3"/>
<dbReference type="PhosphoSitePlus" id="Q6P5G3"/>
<dbReference type="jPOST" id="Q6P5G3"/>
<dbReference type="PaxDb" id="10090-ENSMUSP00000103486"/>
<dbReference type="PeptideAtlas" id="Q6P5G3"/>
<dbReference type="ProteomicsDB" id="295975">
    <molecule id="Q6P5G3-1"/>
</dbReference>
<dbReference type="ProteomicsDB" id="295976">
    <molecule id="Q6P5G3-2"/>
</dbReference>
<dbReference type="Antibodypedia" id="18227">
    <property type="antibodies" value="107 antibodies from 21 providers"/>
</dbReference>
<dbReference type="DNASU" id="103537"/>
<dbReference type="Ensembl" id="ENSMUST00000063718.11">
    <molecule id="Q6P5G3-2"/>
    <property type="protein sequence ID" value="ENSMUSP00000065442.5"/>
    <property type="gene ID" value="ENSMUSG00000059474.14"/>
</dbReference>
<dbReference type="Ensembl" id="ENSMUST00000107853.8">
    <molecule id="Q6P5G3-1"/>
    <property type="protein sequence ID" value="ENSMUSP00000103485.2"/>
    <property type="gene ID" value="ENSMUSG00000059474.14"/>
</dbReference>
<dbReference type="Ensembl" id="ENSMUST00000107854.9">
    <molecule id="Q6P5G3-1"/>
    <property type="protein sequence ID" value="ENSMUSP00000103486.3"/>
    <property type="gene ID" value="ENSMUSG00000059474.14"/>
</dbReference>
<dbReference type="GeneID" id="103537"/>
<dbReference type="KEGG" id="mmu:103537"/>
<dbReference type="UCSC" id="uc007kxn.2">
    <molecule id="Q6P5G3-2"/>
    <property type="organism name" value="mouse"/>
</dbReference>
<dbReference type="UCSC" id="uc007kxo.2">
    <molecule id="Q6P5G3-1"/>
    <property type="organism name" value="mouse"/>
</dbReference>
<dbReference type="AGR" id="MGI:2143977"/>
<dbReference type="CTD" id="54799"/>
<dbReference type="MGI" id="MGI:2143977">
    <property type="gene designation" value="Mbtd1"/>
</dbReference>
<dbReference type="VEuPathDB" id="HostDB:ENSMUSG00000059474"/>
<dbReference type="eggNOG" id="KOG3766">
    <property type="taxonomic scope" value="Eukaryota"/>
</dbReference>
<dbReference type="GeneTree" id="ENSGT00940000153840"/>
<dbReference type="HOGENOM" id="CLU_005352_2_1_1"/>
<dbReference type="InParanoid" id="Q6P5G3"/>
<dbReference type="OMA" id="CAENGMP"/>
<dbReference type="OrthoDB" id="5800688at2759"/>
<dbReference type="PhylomeDB" id="Q6P5G3"/>
<dbReference type="TreeFam" id="TF316498"/>
<dbReference type="BioGRID-ORCS" id="103537">
    <property type="hits" value="7 hits in 83 CRISPR screens"/>
</dbReference>
<dbReference type="ChiTaRS" id="Mbtd1">
    <property type="organism name" value="mouse"/>
</dbReference>
<dbReference type="PRO" id="PR:Q6P5G3"/>
<dbReference type="Proteomes" id="UP000000589">
    <property type="component" value="Chromosome 11"/>
</dbReference>
<dbReference type="RNAct" id="Q6P5G3">
    <property type="molecule type" value="protein"/>
</dbReference>
<dbReference type="Bgee" id="ENSMUSG00000059474">
    <property type="expression patterns" value="Expressed in rostral migratory stream and 270 other cell types or tissues"/>
</dbReference>
<dbReference type="ExpressionAtlas" id="Q6P5G3">
    <property type="expression patterns" value="baseline and differential"/>
</dbReference>
<dbReference type="GO" id="GO:0035267">
    <property type="term" value="C:NuA4 histone acetyltransferase complex"/>
    <property type="evidence" value="ECO:0000250"/>
    <property type="project" value="UniProtKB"/>
</dbReference>
<dbReference type="GO" id="GO:0000786">
    <property type="term" value="C:nucleosome"/>
    <property type="evidence" value="ECO:0000266"/>
    <property type="project" value="ComplexPortal"/>
</dbReference>
<dbReference type="GO" id="GO:0005634">
    <property type="term" value="C:nucleus"/>
    <property type="evidence" value="ECO:0007669"/>
    <property type="project" value="UniProtKB-SubCell"/>
</dbReference>
<dbReference type="GO" id="GO:0035861">
    <property type="term" value="C:site of double-strand break"/>
    <property type="evidence" value="ECO:0007669"/>
    <property type="project" value="Ensembl"/>
</dbReference>
<dbReference type="GO" id="GO:0140005">
    <property type="term" value="F:histone H4K20me2 reader activity"/>
    <property type="evidence" value="ECO:0000250"/>
    <property type="project" value="UniProtKB"/>
</dbReference>
<dbReference type="GO" id="GO:0035064">
    <property type="term" value="F:methylated histone binding"/>
    <property type="evidence" value="ECO:0007669"/>
    <property type="project" value="Ensembl"/>
</dbReference>
<dbReference type="GO" id="GO:0062060">
    <property type="term" value="F:NuA4 histone acetyltransferase complex binding"/>
    <property type="evidence" value="ECO:0007669"/>
    <property type="project" value="Ensembl"/>
</dbReference>
<dbReference type="GO" id="GO:0008270">
    <property type="term" value="F:zinc ion binding"/>
    <property type="evidence" value="ECO:0007669"/>
    <property type="project" value="UniProtKB-KW"/>
</dbReference>
<dbReference type="GO" id="GO:0000724">
    <property type="term" value="P:double-strand break repair via homologous recombination"/>
    <property type="evidence" value="ECO:0000250"/>
    <property type="project" value="UniProtKB"/>
</dbReference>
<dbReference type="GO" id="GO:0048706">
    <property type="term" value="P:embryonic skeletal system development"/>
    <property type="evidence" value="ECO:0000315"/>
    <property type="project" value="MGI"/>
</dbReference>
<dbReference type="GO" id="GO:0045893">
    <property type="term" value="P:positive regulation of DNA-templated transcription"/>
    <property type="evidence" value="ECO:0000303"/>
    <property type="project" value="ComplexPortal"/>
</dbReference>
<dbReference type="GO" id="GO:1905168">
    <property type="term" value="P:positive regulation of double-strand break repair via homologous recombination"/>
    <property type="evidence" value="ECO:0000266"/>
    <property type="project" value="ComplexPortal"/>
</dbReference>
<dbReference type="GO" id="GO:0042981">
    <property type="term" value="P:regulation of apoptotic process"/>
    <property type="evidence" value="ECO:0000303"/>
    <property type="project" value="ComplexPortal"/>
</dbReference>
<dbReference type="GO" id="GO:0051726">
    <property type="term" value="P:regulation of cell cycle"/>
    <property type="evidence" value="ECO:0000266"/>
    <property type="project" value="ComplexPortal"/>
</dbReference>
<dbReference type="GO" id="GO:2000779">
    <property type="term" value="P:regulation of double-strand break repair"/>
    <property type="evidence" value="ECO:0000303"/>
    <property type="project" value="ComplexPortal"/>
</dbReference>
<dbReference type="CDD" id="cd20120">
    <property type="entry name" value="MBT_MBTD1_rpt1"/>
    <property type="match status" value="1"/>
</dbReference>
<dbReference type="CDD" id="cd20123">
    <property type="entry name" value="MBT_MBTD1_rpt2"/>
    <property type="match status" value="1"/>
</dbReference>
<dbReference type="CDD" id="cd20126">
    <property type="entry name" value="MBT_MBTD1_rpt3"/>
    <property type="match status" value="1"/>
</dbReference>
<dbReference type="CDD" id="cd20129">
    <property type="entry name" value="MBT_MBTD1_rpt4"/>
    <property type="match status" value="1"/>
</dbReference>
<dbReference type="FunFam" id="2.30.30.140:FF:000010">
    <property type="entry name" value="MBT domain-containing protein 1 isoform X1"/>
    <property type="match status" value="1"/>
</dbReference>
<dbReference type="FunFam" id="2.30.30.140:FF:000015">
    <property type="entry name" value="MBT domain-containing protein 1 isoform X1"/>
    <property type="match status" value="1"/>
</dbReference>
<dbReference type="FunFam" id="2.30.30.140:FF:000019">
    <property type="entry name" value="MBT domain-containing protein 1 isoform X1"/>
    <property type="match status" value="1"/>
</dbReference>
<dbReference type="FunFam" id="2.30.30.140:FF:000032">
    <property type="entry name" value="MBT domain-containing protein 1 isoform X1"/>
    <property type="match status" value="1"/>
</dbReference>
<dbReference type="FunFam" id="3.30.60.160:FF:000001">
    <property type="entry name" value="MBT domain-containing protein 1 isoform X1"/>
    <property type="match status" value="1"/>
</dbReference>
<dbReference type="Gene3D" id="2.30.30.140">
    <property type="match status" value="4"/>
</dbReference>
<dbReference type="Gene3D" id="3.30.60.160">
    <property type="match status" value="1"/>
</dbReference>
<dbReference type="InterPro" id="IPR004092">
    <property type="entry name" value="Mbt"/>
</dbReference>
<dbReference type="InterPro" id="IPR050548">
    <property type="entry name" value="PcG_chromatin_remod_factors"/>
</dbReference>
<dbReference type="InterPro" id="IPR012313">
    <property type="entry name" value="Znf_FCS"/>
</dbReference>
<dbReference type="InterPro" id="IPR038603">
    <property type="entry name" value="Znf_FCS_sf"/>
</dbReference>
<dbReference type="PANTHER" id="PTHR12247:SF79">
    <property type="entry name" value="MBT DOMAIN-CONTAINING PROTEIN 1"/>
    <property type="match status" value="1"/>
</dbReference>
<dbReference type="PANTHER" id="PTHR12247">
    <property type="entry name" value="POLYCOMB GROUP PROTEIN"/>
    <property type="match status" value="1"/>
</dbReference>
<dbReference type="Pfam" id="PF02820">
    <property type="entry name" value="MBT"/>
    <property type="match status" value="4"/>
</dbReference>
<dbReference type="Pfam" id="PF21319">
    <property type="entry name" value="zf-FCS_1"/>
    <property type="match status" value="1"/>
</dbReference>
<dbReference type="SMART" id="SM00561">
    <property type="entry name" value="MBT"/>
    <property type="match status" value="4"/>
</dbReference>
<dbReference type="SUPFAM" id="SSF63748">
    <property type="entry name" value="Tudor/PWWP/MBT"/>
    <property type="match status" value="4"/>
</dbReference>
<dbReference type="PROSITE" id="PS51079">
    <property type="entry name" value="MBT"/>
    <property type="match status" value="4"/>
</dbReference>
<dbReference type="PROSITE" id="PS51024">
    <property type="entry name" value="ZF_FCS"/>
    <property type="match status" value="1"/>
</dbReference>
<accession>Q6P5G3</accession>
<accession>Q6P3F0</accession>
<accession>Q8VE12</accession>
<feature type="chain" id="PRO_0000313718" description="MBT domain-containing protein 1">
    <location>
        <begin position="1"/>
        <end position="631"/>
    </location>
</feature>
<feature type="repeat" description="MBT 1">
    <location>
        <begin position="144"/>
        <end position="248"/>
    </location>
</feature>
<feature type="repeat" description="MBT 2">
    <location>
        <begin position="256"/>
        <end position="353"/>
    </location>
</feature>
<feature type="repeat" description="MBT 3">
    <location>
        <begin position="354"/>
        <end position="459"/>
    </location>
</feature>
<feature type="repeat" description="MBT 4">
    <location>
        <begin position="467"/>
        <end position="563"/>
    </location>
</feature>
<feature type="zinc finger region" description="FCS-type" evidence="2">
    <location>
        <begin position="45"/>
        <end position="80"/>
    </location>
</feature>
<feature type="region of interest" description="Disordered" evidence="3">
    <location>
        <begin position="1"/>
        <end position="31"/>
    </location>
</feature>
<feature type="region of interest" description="Disordered" evidence="3">
    <location>
        <begin position="563"/>
        <end position="631"/>
    </location>
</feature>
<feature type="compositionally biased region" description="Low complexity" evidence="3">
    <location>
        <begin position="564"/>
        <end position="576"/>
    </location>
</feature>
<feature type="compositionally biased region" description="Basic residues" evidence="3">
    <location>
        <begin position="577"/>
        <end position="593"/>
    </location>
</feature>
<feature type="binding site" evidence="2">
    <location>
        <position position="54"/>
    </location>
    <ligand>
        <name>Zn(2+)</name>
        <dbReference type="ChEBI" id="CHEBI:29105"/>
    </ligand>
</feature>
<feature type="binding site" evidence="2">
    <location>
        <position position="57"/>
    </location>
    <ligand>
        <name>Zn(2+)</name>
        <dbReference type="ChEBI" id="CHEBI:29105"/>
    </ligand>
</feature>
<feature type="binding site" evidence="2">
    <location>
        <position position="74"/>
    </location>
    <ligand>
        <name>Zn(2+)</name>
        <dbReference type="ChEBI" id="CHEBI:29105"/>
    </ligand>
</feature>
<feature type="binding site" evidence="2">
    <location>
        <position position="78"/>
    </location>
    <ligand>
        <name>Zn(2+)</name>
        <dbReference type="ChEBI" id="CHEBI:29105"/>
    </ligand>
</feature>
<feature type="modified residue" description="N6-acetyllysine" evidence="7">
    <location>
        <position position="115"/>
    </location>
</feature>
<feature type="splice variant" id="VSP_030119" description="In isoform 2." evidence="4">
    <original>M</original>
    <variation>MITAIKKQNILHNPKEKADWFGM</variation>
    <location>
        <position position="1"/>
    </location>
</feature>
<feature type="splice variant" id="VSP_030120" description="In isoform 2." evidence="4">
    <original>MTTSQLKEELLDGEDYSFLHGASDQESNGSATVYIKQEP</original>
    <variation>STEEMTES</variation>
    <location>
        <begin position="593"/>
        <end position="631"/>
    </location>
</feature>
<evidence type="ECO:0000250" key="1">
    <source>
        <dbReference type="UniProtKB" id="Q05BQ5"/>
    </source>
</evidence>
<evidence type="ECO:0000255" key="2">
    <source>
        <dbReference type="PROSITE-ProRule" id="PRU00367"/>
    </source>
</evidence>
<evidence type="ECO:0000256" key="3">
    <source>
        <dbReference type="SAM" id="MobiDB-lite"/>
    </source>
</evidence>
<evidence type="ECO:0000303" key="4">
    <source>
    </source>
</evidence>
<evidence type="ECO:0000305" key="5"/>
<evidence type="ECO:0000312" key="6">
    <source>
        <dbReference type="MGI" id="MGI:2143977"/>
    </source>
</evidence>
<evidence type="ECO:0007744" key="7">
    <source>
    </source>
</evidence>